<reference key="1">
    <citation type="journal article" date="1997" name="Nature">
        <title>A family of cytokine-inducible inhibitors of signaling.</title>
        <authorList>
            <person name="Starr R."/>
            <person name="Willson T.A."/>
            <person name="Viney E.M."/>
            <person name="Murray L.J.L."/>
            <person name="Rayner J.R."/>
            <person name="Jenkins B.J."/>
            <person name="Gonda T.J."/>
            <person name="Alexander W.S."/>
            <person name="Metcalf D."/>
            <person name="Nicola N.A."/>
            <person name="Hilton D.J."/>
        </authorList>
    </citation>
    <scope>NUCLEOTIDE SEQUENCE [MRNA]</scope>
    <source>
        <tissue>Lung</tissue>
        <tissue>Thymus</tissue>
    </source>
</reference>
<reference key="2">
    <citation type="submission" date="2000-10" db="EMBL/GenBank/DDBJ databases">
        <title>Murine SOCS3 gene structure.</title>
        <authorList>
            <person name="Le Provost F."/>
            <person name="Henninghausen L."/>
        </authorList>
    </citation>
    <scope>NUCLEOTIDE SEQUENCE [GENOMIC DNA]</scope>
</reference>
<reference key="3">
    <citation type="journal article" date="2005" name="Science">
        <title>The transcriptional landscape of the mammalian genome.</title>
        <authorList>
            <person name="Carninci P."/>
            <person name="Kasukawa T."/>
            <person name="Katayama S."/>
            <person name="Gough J."/>
            <person name="Frith M.C."/>
            <person name="Maeda N."/>
            <person name="Oyama R."/>
            <person name="Ravasi T."/>
            <person name="Lenhard B."/>
            <person name="Wells C."/>
            <person name="Kodzius R."/>
            <person name="Shimokawa K."/>
            <person name="Bajic V.B."/>
            <person name="Brenner S.E."/>
            <person name="Batalov S."/>
            <person name="Forrest A.R."/>
            <person name="Zavolan M."/>
            <person name="Davis M.J."/>
            <person name="Wilming L.G."/>
            <person name="Aidinis V."/>
            <person name="Allen J.E."/>
            <person name="Ambesi-Impiombato A."/>
            <person name="Apweiler R."/>
            <person name="Aturaliya R.N."/>
            <person name="Bailey T.L."/>
            <person name="Bansal M."/>
            <person name="Baxter L."/>
            <person name="Beisel K.W."/>
            <person name="Bersano T."/>
            <person name="Bono H."/>
            <person name="Chalk A.M."/>
            <person name="Chiu K.P."/>
            <person name="Choudhary V."/>
            <person name="Christoffels A."/>
            <person name="Clutterbuck D.R."/>
            <person name="Crowe M.L."/>
            <person name="Dalla E."/>
            <person name="Dalrymple B.P."/>
            <person name="de Bono B."/>
            <person name="Della Gatta G."/>
            <person name="di Bernardo D."/>
            <person name="Down T."/>
            <person name="Engstrom P."/>
            <person name="Fagiolini M."/>
            <person name="Faulkner G."/>
            <person name="Fletcher C.F."/>
            <person name="Fukushima T."/>
            <person name="Furuno M."/>
            <person name="Futaki S."/>
            <person name="Gariboldi M."/>
            <person name="Georgii-Hemming P."/>
            <person name="Gingeras T.R."/>
            <person name="Gojobori T."/>
            <person name="Green R.E."/>
            <person name="Gustincich S."/>
            <person name="Harbers M."/>
            <person name="Hayashi Y."/>
            <person name="Hensch T.K."/>
            <person name="Hirokawa N."/>
            <person name="Hill D."/>
            <person name="Huminiecki L."/>
            <person name="Iacono M."/>
            <person name="Ikeo K."/>
            <person name="Iwama A."/>
            <person name="Ishikawa T."/>
            <person name="Jakt M."/>
            <person name="Kanapin A."/>
            <person name="Katoh M."/>
            <person name="Kawasawa Y."/>
            <person name="Kelso J."/>
            <person name="Kitamura H."/>
            <person name="Kitano H."/>
            <person name="Kollias G."/>
            <person name="Krishnan S.P."/>
            <person name="Kruger A."/>
            <person name="Kummerfeld S.K."/>
            <person name="Kurochkin I.V."/>
            <person name="Lareau L.F."/>
            <person name="Lazarevic D."/>
            <person name="Lipovich L."/>
            <person name="Liu J."/>
            <person name="Liuni S."/>
            <person name="McWilliam S."/>
            <person name="Madan Babu M."/>
            <person name="Madera M."/>
            <person name="Marchionni L."/>
            <person name="Matsuda H."/>
            <person name="Matsuzawa S."/>
            <person name="Miki H."/>
            <person name="Mignone F."/>
            <person name="Miyake S."/>
            <person name="Morris K."/>
            <person name="Mottagui-Tabar S."/>
            <person name="Mulder N."/>
            <person name="Nakano N."/>
            <person name="Nakauchi H."/>
            <person name="Ng P."/>
            <person name="Nilsson R."/>
            <person name="Nishiguchi S."/>
            <person name="Nishikawa S."/>
            <person name="Nori F."/>
            <person name="Ohara O."/>
            <person name="Okazaki Y."/>
            <person name="Orlando V."/>
            <person name="Pang K.C."/>
            <person name="Pavan W.J."/>
            <person name="Pavesi G."/>
            <person name="Pesole G."/>
            <person name="Petrovsky N."/>
            <person name="Piazza S."/>
            <person name="Reed J."/>
            <person name="Reid J.F."/>
            <person name="Ring B.Z."/>
            <person name="Ringwald M."/>
            <person name="Rost B."/>
            <person name="Ruan Y."/>
            <person name="Salzberg S.L."/>
            <person name="Sandelin A."/>
            <person name="Schneider C."/>
            <person name="Schoenbach C."/>
            <person name="Sekiguchi K."/>
            <person name="Semple C.A."/>
            <person name="Seno S."/>
            <person name="Sessa L."/>
            <person name="Sheng Y."/>
            <person name="Shibata Y."/>
            <person name="Shimada H."/>
            <person name="Shimada K."/>
            <person name="Silva D."/>
            <person name="Sinclair B."/>
            <person name="Sperling S."/>
            <person name="Stupka E."/>
            <person name="Sugiura K."/>
            <person name="Sultana R."/>
            <person name="Takenaka Y."/>
            <person name="Taki K."/>
            <person name="Tammoja K."/>
            <person name="Tan S.L."/>
            <person name="Tang S."/>
            <person name="Taylor M.S."/>
            <person name="Tegner J."/>
            <person name="Teichmann S.A."/>
            <person name="Ueda H.R."/>
            <person name="van Nimwegen E."/>
            <person name="Verardo R."/>
            <person name="Wei C.L."/>
            <person name="Yagi K."/>
            <person name="Yamanishi H."/>
            <person name="Zabarovsky E."/>
            <person name="Zhu S."/>
            <person name="Zimmer A."/>
            <person name="Hide W."/>
            <person name="Bult C."/>
            <person name="Grimmond S.M."/>
            <person name="Teasdale R.D."/>
            <person name="Liu E.T."/>
            <person name="Brusic V."/>
            <person name="Quackenbush J."/>
            <person name="Wahlestedt C."/>
            <person name="Mattick J.S."/>
            <person name="Hume D.A."/>
            <person name="Kai C."/>
            <person name="Sasaki D."/>
            <person name="Tomaru Y."/>
            <person name="Fukuda S."/>
            <person name="Kanamori-Katayama M."/>
            <person name="Suzuki M."/>
            <person name="Aoki J."/>
            <person name="Arakawa T."/>
            <person name="Iida J."/>
            <person name="Imamura K."/>
            <person name="Itoh M."/>
            <person name="Kato T."/>
            <person name="Kawaji H."/>
            <person name="Kawagashira N."/>
            <person name="Kawashima T."/>
            <person name="Kojima M."/>
            <person name="Kondo S."/>
            <person name="Konno H."/>
            <person name="Nakano K."/>
            <person name="Ninomiya N."/>
            <person name="Nishio T."/>
            <person name="Okada M."/>
            <person name="Plessy C."/>
            <person name="Shibata K."/>
            <person name="Shiraki T."/>
            <person name="Suzuki S."/>
            <person name="Tagami M."/>
            <person name="Waki K."/>
            <person name="Watahiki A."/>
            <person name="Okamura-Oho Y."/>
            <person name="Suzuki H."/>
            <person name="Kawai J."/>
            <person name="Hayashizaki Y."/>
        </authorList>
    </citation>
    <scope>NUCLEOTIDE SEQUENCE [LARGE SCALE MRNA]</scope>
    <source>
        <strain>C57BL/6J</strain>
        <strain>NOD</strain>
        <tissue>Bone marrow</tissue>
        <tissue>Cerebellum</tissue>
        <tissue>Spleen</tissue>
    </source>
</reference>
<reference key="4">
    <citation type="journal article" date="2004" name="Genome Res.">
        <title>The status, quality, and expansion of the NIH full-length cDNA project: the Mammalian Gene Collection (MGC).</title>
        <authorList>
            <consortium name="The MGC Project Team"/>
        </authorList>
    </citation>
    <scope>NUCLEOTIDE SEQUENCE [LARGE SCALE MRNA]</scope>
    <source>
        <strain>C57BL/6J</strain>
        <tissue>Brain</tissue>
    </source>
</reference>
<reference key="5">
    <citation type="journal article" date="1999" name="Proc. Natl. Acad. Sci. U.S.A.">
        <title>Autoregulation of pituitary corticotroph SOCS-3 expression: characterization of the murine SOCS-3 promoter.</title>
        <authorList>
            <person name="Auernhammer C.J."/>
            <person name="Bousquet C."/>
            <person name="Melmed S."/>
        </authorList>
    </citation>
    <scope>NUCLEOTIDE SEQUENCE [GENOMIC DNA] OF 1-30</scope>
    <source>
        <strain>ICR X Swiss Webster</strain>
    </source>
</reference>
<reference key="6">
    <citation type="journal article" date="1997" name="Mol. Cell. Biol.">
        <title>E2a-Pbx1 induces aberrant expression of tissue-specific and developmentally regulated genes when expressed in NIH 3T3 fibroblasts.</title>
        <authorList>
            <person name="Fu X."/>
            <person name="Kamps M.P."/>
        </authorList>
    </citation>
    <scope>NUCLEOTIDE SEQUENCE [MRNA] OF 221-225</scope>
    <source>
        <strain>BALB/cJ</strain>
    </source>
</reference>
<reference key="7">
    <citation type="journal article" date="1999" name="EMBO J.">
        <title>Mutational analyses of the SOCS proteins suggest a dual domain requirement but distinct mechanisms for inhibition of LIF and IL-6 signal transduction.</title>
        <authorList>
            <person name="Nicholson S.E."/>
            <person name="Willson T.A."/>
            <person name="Farley A."/>
            <person name="Starr R."/>
            <person name="Zhang J.-G."/>
            <person name="Baca M."/>
            <person name="Alexander W.S."/>
            <person name="Metcalf D."/>
            <person name="Hilton D.J."/>
            <person name="Nicola N.A."/>
        </authorList>
    </citation>
    <scope>FUNCTION IN LIF AND IL6 SIGNALING</scope>
</reference>
<reference key="8">
    <citation type="journal article" date="2000" name="J. Biol. Chem.">
        <title>SOCS-3 is an insulin-induced negative regulator of insulin signaling.</title>
        <authorList>
            <person name="Emanuelli B."/>
            <person name="Peraldi P."/>
            <person name="Filloux C."/>
            <person name="Sawka-Verhelle D."/>
            <person name="Hilton D."/>
            <person name="Van Obberghen E."/>
        </authorList>
    </citation>
    <scope>FUNCTION IN INHIBITION OF INSR KINASE ACTIVITY</scope>
    <scope>INTERACTION WITH INSR</scope>
</reference>
<reference key="9">
    <citation type="journal article" date="2000" name="J. Biol. Chem.">
        <title>CIS3/SOCS-3 suppresses erythropoietin (EPO) signaling by binding the EPO receptor and JAK2.</title>
        <authorList>
            <person name="Sasaki A."/>
            <person name="Yasukawa H."/>
            <person name="Shouda T."/>
            <person name="Kitamura T."/>
            <person name="Dikic I."/>
            <person name="Yoshimura A."/>
        </authorList>
    </citation>
    <scope>INTERACTION WITH EPOR AND JAK2</scope>
    <scope>MUTAGENESIS OF LEU-22; PHE-25; GLY-45 AND ARG-71</scope>
</reference>
<reference key="10">
    <citation type="journal article" date="2002" name="Proc. Natl. Acad. Sci. U.S.A.">
        <title>Expression of the suppressor of cytokine signaling-5 (SOCS5) negatively regulates IL-4-dependent STAT6 activation and Th2 differentiation.</title>
        <authorList>
            <person name="Seki Y."/>
            <person name="Hayashi K."/>
            <person name="Matsumoto A."/>
            <person name="Seki N."/>
            <person name="Tsukada J."/>
            <person name="Ransom J."/>
            <person name="Naka T."/>
            <person name="Kishimoto T."/>
            <person name="Yoshimura A."/>
            <person name="Kubo M."/>
        </authorList>
    </citation>
    <scope>TISSUE SPECIFICITY</scope>
</reference>
<reference key="11">
    <citation type="journal article" date="1999" name="Cell">
        <title>SOCS3 is essential in the regulation of fetal liver erythropoiesis.</title>
        <authorList>
            <person name="Marine J.-C."/>
            <person name="McKay C."/>
            <person name="Wang D."/>
            <person name="Topham D.J."/>
            <person name="Parganas E."/>
            <person name="Nakajima H."/>
            <person name="Pendeville H."/>
            <person name="Yasukawa H."/>
            <person name="Sasaki A."/>
            <person name="Yoshimura A."/>
            <person name="Ihle J.N."/>
        </authorList>
    </citation>
    <scope>FUNCTION IN ERYTHROPOIESIS</scope>
</reference>
<reference key="12">
    <citation type="journal article" date="2003" name="Nat. Immunol.">
        <title>SOCS3 negatively regulates IL-6 signaling in vivo.</title>
        <authorList>
            <person name="Croker B.A."/>
            <person name="Krebs D.L."/>
            <person name="Zhang J.-G."/>
            <person name="Wormald S."/>
            <person name="Willson T.A."/>
            <person name="Stanley E.G."/>
            <person name="Robb L."/>
            <person name="Greenhalgh C.J."/>
            <person name="Foerster I."/>
            <person name="Clausen B.E."/>
            <person name="Nicola N.A."/>
            <person name="Metcalf D."/>
            <person name="Hilton D.J."/>
            <person name="Roberts A.W."/>
            <person name="Alexander W.S."/>
        </authorList>
    </citation>
    <scope>ROLE IN IL-6 SIGNALING</scope>
</reference>
<reference key="13">
    <citation type="journal article" date="2003" name="Nat. Med.">
        <title>SOCS-3 regulates onset and maintenance of T(H)2-mediated allergic responses.</title>
        <authorList>
            <person name="Seki Y."/>
            <person name="Inoue H."/>
            <person name="Nagata N."/>
            <person name="Hayashi K."/>
            <person name="Fukuyama S."/>
            <person name="Matsumoto K."/>
            <person name="Komine O."/>
            <person name="Hamano S."/>
            <person name="Himeno K."/>
            <person name="Inagaki-Ohara K."/>
            <person name="Cacalano N."/>
            <person name="O'Garra A."/>
            <person name="Oshida T."/>
            <person name="Saito H."/>
            <person name="Johnston J.A."/>
            <person name="Yoshimura A."/>
            <person name="Kubo M."/>
        </authorList>
    </citation>
    <scope>ROLE IN ALLERGIC RESPONSE</scope>
    <scope>INDUCTION BY IL-4</scope>
</reference>
<reference key="14">
    <citation type="journal article" date="2004" name="J. Biol. Chem.">
        <title>BCL10 mediates lipopolysaccharide/toll-like receptor-4 signaling through interaction with Pellino2.</title>
        <authorList>
            <person name="Liu Y."/>
            <person name="Dong W."/>
            <person name="Chen L."/>
            <person name="Xiang R."/>
            <person name="Xiao H."/>
            <person name="De G."/>
            <person name="Wang Z."/>
            <person name="Qi Y."/>
        </authorList>
    </citation>
    <scope>INTERACTION WITH BCL10</scope>
</reference>
<reference key="15">
    <citation type="journal article" date="2012" name="J. Biol. Chem.">
        <title>Proteasomal degradation of Nod2 protein mediates tolerance to bacterial cell wall components.</title>
        <authorList>
            <person name="Lee K.H."/>
            <person name="Biswas A."/>
            <person name="Liu Y.J."/>
            <person name="Kobayashi K.S."/>
        </authorList>
    </citation>
    <scope>INTERACTION WITH NOD2</scope>
</reference>
<reference key="16">
    <citation type="journal article" date="2006" name="Mol. Cell">
        <title>The structure of SOCS3 reveals the basis of the extended SH2 domain function and identifies an unstructured insertion that regulates stability.</title>
        <authorList>
            <person name="Babon J.J."/>
            <person name="McManus E.J."/>
            <person name="Yao S."/>
            <person name="DeSouza D.P."/>
            <person name="Mielke L.A."/>
            <person name="Sprigg N.S."/>
            <person name="Willson T.A."/>
            <person name="Hilton D.J."/>
            <person name="Nicola N.A."/>
            <person name="Baca M."/>
            <person name="Nicholson S.E."/>
            <person name="Norton R.S."/>
        </authorList>
    </citation>
    <scope>STRUCTURE BY NMR OF 22-185</scope>
</reference>
<reference key="17">
    <citation type="journal article" date="2006" name="Structure">
        <title>Structural basis for phosphotyrosine recognition by suppressor of cytokine signaling-3.</title>
        <authorList>
            <person name="Bergamin E."/>
            <person name="Wu J."/>
            <person name="Hubbard S.R."/>
        </authorList>
    </citation>
    <scope>X-RAY CRYSTALLOGRAPHY (2.0 ANGSTROMS) OF 15-185 IN COMPLEX WITH PHOSPHORYLATED IL6ST</scope>
</reference>
<protein>
    <recommendedName>
        <fullName evidence="16">Suppressor of cytokine signaling 3</fullName>
        <shortName>SOCS-3</shortName>
    </recommendedName>
    <alternativeName>
        <fullName>Cytokine-inducible SH2 protein 3</fullName>
        <shortName>CIS-3</shortName>
    </alternativeName>
    <alternativeName>
        <fullName>Protein EF-10</fullName>
    </alternativeName>
</protein>
<evidence type="ECO:0000250" key="1"/>
<evidence type="ECO:0000250" key="2">
    <source>
        <dbReference type="UniProtKB" id="O14543"/>
    </source>
</evidence>
<evidence type="ECO:0000255" key="3">
    <source>
        <dbReference type="PROSITE-ProRule" id="PRU00191"/>
    </source>
</evidence>
<evidence type="ECO:0000255" key="4">
    <source>
        <dbReference type="PROSITE-ProRule" id="PRU00194"/>
    </source>
</evidence>
<evidence type="ECO:0000256" key="5">
    <source>
        <dbReference type="SAM" id="MobiDB-lite"/>
    </source>
</evidence>
<evidence type="ECO:0000269" key="6">
    <source>
    </source>
</evidence>
<evidence type="ECO:0000269" key="7">
    <source>
    </source>
</evidence>
<evidence type="ECO:0000269" key="8">
    <source>
    </source>
</evidence>
<evidence type="ECO:0000269" key="9">
    <source>
    </source>
</evidence>
<evidence type="ECO:0000269" key="10">
    <source>
    </source>
</evidence>
<evidence type="ECO:0000269" key="11">
    <source>
    </source>
</evidence>
<evidence type="ECO:0000269" key="12">
    <source>
    </source>
</evidence>
<evidence type="ECO:0000269" key="13">
    <source>
    </source>
</evidence>
<evidence type="ECO:0000269" key="14">
    <source>
    </source>
</evidence>
<evidence type="ECO:0000269" key="15">
    <source>
    </source>
</evidence>
<evidence type="ECO:0000305" key="16"/>
<evidence type="ECO:0000312" key="17">
    <source>
        <dbReference type="MGI" id="MGI:1201791"/>
    </source>
</evidence>
<evidence type="ECO:0007829" key="18">
    <source>
        <dbReference type="PDB" id="2BBU"/>
    </source>
</evidence>
<evidence type="ECO:0007829" key="19">
    <source>
        <dbReference type="PDB" id="2HMH"/>
    </source>
</evidence>
<evidence type="ECO:0007829" key="20">
    <source>
        <dbReference type="PDB" id="2JZ3"/>
    </source>
</evidence>
<feature type="chain" id="PRO_0000181244" description="Suppressor of cytokine signaling 3">
    <location>
        <begin position="1"/>
        <end position="225"/>
    </location>
</feature>
<feature type="domain" description="SH2" evidence="3">
    <location>
        <begin position="46"/>
        <end position="142"/>
    </location>
</feature>
<feature type="domain" description="SOCS box" evidence="4">
    <location>
        <begin position="177"/>
        <end position="224"/>
    </location>
</feature>
<feature type="region of interest" description="Kinase inhibitory region (KIR)">
    <location>
        <begin position="22"/>
        <end position="33"/>
    </location>
</feature>
<feature type="region of interest" description="Extended SH2 subdomain (ESS)">
    <location>
        <begin position="34"/>
        <end position="45"/>
    </location>
</feature>
<feature type="region of interest" description="Disordered" evidence="5">
    <location>
        <begin position="131"/>
        <end position="160"/>
    </location>
</feature>
<feature type="mutagenesis site" description="No effect on LIF-induced signal transduction suppression." evidence="8">
    <original>L</original>
    <variation>A</variation>
    <location>
        <position position="22"/>
    </location>
</feature>
<feature type="mutagenesis site" description="Abolishes binding to JAK2. No effect on binding to EPOR." evidence="8">
    <original>L</original>
    <variation>D</variation>
    <location>
        <position position="22"/>
    </location>
</feature>
<feature type="mutagenesis site" description="Loss of LIF/EPO-induced signal transduction suppression. Abolishes binding to JAK2 and to EPOR." evidence="8">
    <original>F</original>
    <variation>A</variation>
    <location>
        <position position="25"/>
    </location>
</feature>
<feature type="mutagenesis site" description="No effect on LIF-induced signal transduction suppression.">
    <original>E</original>
    <variation>R</variation>
    <location>
        <position position="30"/>
    </location>
</feature>
<feature type="mutagenesis site" description="Abolishes binding to EPOR. No effect on binding to JAK2." evidence="8">
    <original>G</original>
    <variation>A</variation>
    <location>
        <position position="45"/>
    </location>
</feature>
<feature type="mutagenesis site" description="Little effect on LIF-induced signal transduction suppression. Loss of EPO-induced signal transduction suppression. Abolishes binding to JAK2 and EPOR." evidence="8">
    <original>R</original>
    <variation>K</variation>
    <location>
        <position position="71"/>
    </location>
</feature>
<feature type="helix" evidence="19">
    <location>
        <begin position="32"/>
        <end position="43"/>
    </location>
</feature>
<feature type="strand" evidence="19">
    <location>
        <begin position="45"/>
        <end position="48"/>
    </location>
</feature>
<feature type="helix" evidence="19">
    <location>
        <begin position="53"/>
        <end position="61"/>
    </location>
</feature>
<feature type="strand" evidence="19">
    <location>
        <begin position="67"/>
        <end position="72"/>
    </location>
</feature>
<feature type="strand" evidence="19">
    <location>
        <begin position="79"/>
        <end position="86"/>
    </location>
</feature>
<feature type="strand" evidence="19">
    <location>
        <begin position="89"/>
        <end position="96"/>
    </location>
</feature>
<feature type="helix" evidence="19">
    <location>
        <begin position="98"/>
        <end position="100"/>
    </location>
</feature>
<feature type="strand" evidence="19">
    <location>
        <begin position="102"/>
        <end position="104"/>
    </location>
</feature>
<feature type="strand" evidence="19">
    <location>
        <begin position="117"/>
        <end position="119"/>
    </location>
</feature>
<feature type="helix" evidence="19">
    <location>
        <begin position="120"/>
        <end position="126"/>
    </location>
</feature>
<feature type="strand" evidence="18">
    <location>
        <begin position="137"/>
        <end position="139"/>
    </location>
</feature>
<feature type="strand" evidence="19">
    <location>
        <begin position="165"/>
        <end position="167"/>
    </location>
</feature>
<feature type="strand" evidence="19">
    <location>
        <begin position="174"/>
        <end position="176"/>
    </location>
</feature>
<feature type="helix" evidence="20">
    <location>
        <begin position="189"/>
        <end position="199"/>
    </location>
</feature>
<proteinExistence type="evidence at protein level"/>
<comment type="function">
    <text evidence="2 6 7 10 11 15">SOCS family proteins form part of a classical negative feedback system that regulates cytokine signal transduction. SOCS3 is involved in negative regulation of cytokines that signal through the JAK/STAT pathway. Inhibits cytokine signal transduction by binding to tyrosine kinase receptors including IL6ST/gp130, LIF, erythropoietin, insulin, IL12, GCSF and leptin receptors (PubMed:10821852, PubMed:12754505, PubMed:9889194). Binding to JAK2 inhibits its kinase activity and regulates IL6 signaling (PubMed:12754505, PubMed:9889194). Suppresses fetal liver erythropoiesis (PubMed:10490101). Regulates onset and maintenance of allergic responses mediated by T-helper type 2 cells (PubMed:12847520). Probable substrate recognition component of a SCF-like ECS (Elongin BC-CUL2/5-SOCS-box protein) E3 ubiquitin-protein ligase complex which mediates the ubiquitination and subsequent proteasomal degradation of target proteins (By similarity).</text>
</comment>
<comment type="pathway">
    <text>Protein modification; protein ubiquitination.</text>
</comment>
<comment type="subunit">
    <text evidence="2 7 8 12 13 14">Interacts with multiple activated proteins of the tyrosine kinase signaling pathway including IGF1 receptor, insulin receptor and JAK2. Binding to JAK2 is mediated through the KIR and SH2 domains to a phosphorylated tyrosine residue within the JAK2 JH1 domain (By similarity). Binds specific activated tyrosine residues of the leptin, EPO, IL12, GSCF and gp130 receptors (PubMed:10882725). Interaction with CSNK1E stabilizes SOCS3 protein (By similarity). Component of the probable ECS(SOCS3) E3 ubiquitin-protein ligase complex which contains CUL5, RNF7/RBX2, elongin BC complex and SOCS3 (By similarity). Interacts with CUL5, RNF7, ELOB and ELOC (By similarity). Interacts with FGFR3 (By similarity). Interacts with INSR (PubMed:10821852). Interacts with BCL10; this interaction may interfere with BCL10-binding with PELI2 (PubMed:15213237). Interacts with NOD2 (via CARD domain); the interaction promotes NOD2 degradation (PubMed:23019338).</text>
</comment>
<comment type="interaction">
    <interactant intactId="EBI-2659360">
        <id>O35718</id>
    </interactant>
    <interactant intactId="EBI-3862992">
        <id>Q00560</id>
        <label>Il6st</label>
    </interactant>
    <organismsDiffer>false</organismsDiffer>
    <experiments>6</experiments>
</comment>
<comment type="tissue specificity">
    <text evidence="9">Low expression in lung, spleen and thymus. Expressed in Th2 but not TH1 cells.</text>
</comment>
<comment type="developmental stage">
    <text>In the developing brain, expressed at low levels from 10 dpc stages to young adulthood (P25) with peak levels from 14 dpc to P8. In the cortex, first expressed uniformly in all cells at 14 dpc. Not expressed in the retina. Highly expressed in fetal liver progenitors at 12.5 dpc.</text>
</comment>
<comment type="induction">
    <text evidence="11">By a subset of cytokines including EPO, leptin, LIF, IL-2, IL-3, IL-4, IGF1, growth hormone and prolactin.</text>
</comment>
<comment type="domain">
    <text>The ESS and SH2 domains are required for JAK phosphotyrosine binding. Further interaction with the KIR domain is necessary for signal and kinase inhibition.</text>
</comment>
<comment type="domain">
    <text evidence="1">The SOCS box domain mediates the interaction with the Elongin BC complex, an adapter module in different E3 ubiquitin ligase complexes.</text>
</comment>
<comment type="PTM">
    <text evidence="1">Phosphorylated on tyrosine residues after stimulation by the cytokines, IL-2, EPO or IGF1.</text>
</comment>
<keyword id="KW-0002">3D-structure</keyword>
<keyword id="KW-0341">Growth regulation</keyword>
<keyword id="KW-0597">Phosphoprotein</keyword>
<keyword id="KW-1185">Reference proteome</keyword>
<keyword id="KW-0727">SH2 domain</keyword>
<keyword id="KW-0734">Signal transduction inhibitor</keyword>
<keyword id="KW-0833">Ubl conjugation pathway</keyword>
<sequence>MVTHSKFPAAGMSRPLDTSLRLKTFSSKSEYQLVVNAVRKLQESGFYWSAVTGGEANLLLSAEPAGTFLIRDSSDQRHFFTLSVKTQSGTKNLRIQCEGGSFSLQSDPRSTQPVPRFDCVLKLVHHYMPPPGTPSFSLPPTEPSSEVPEQPPAQALPGSTPKRAYYIYSGGEKIPLVLSRPLSSNVATLQHLCRKTVNGHLDSYEKVTQLPGPIREFLDQYDAPL</sequence>
<organism>
    <name type="scientific">Mus musculus</name>
    <name type="common">Mouse</name>
    <dbReference type="NCBI Taxonomy" id="10090"/>
    <lineage>
        <taxon>Eukaryota</taxon>
        <taxon>Metazoa</taxon>
        <taxon>Chordata</taxon>
        <taxon>Craniata</taxon>
        <taxon>Vertebrata</taxon>
        <taxon>Euteleostomi</taxon>
        <taxon>Mammalia</taxon>
        <taxon>Eutheria</taxon>
        <taxon>Euarchontoglires</taxon>
        <taxon>Glires</taxon>
        <taxon>Rodentia</taxon>
        <taxon>Myomorpha</taxon>
        <taxon>Muroidea</taxon>
        <taxon>Muridae</taxon>
        <taxon>Murinae</taxon>
        <taxon>Mus</taxon>
        <taxon>Mus</taxon>
    </lineage>
</organism>
<gene>
    <name evidence="17" type="primary">Socs3</name>
    <name type="synonym">Cis3</name>
    <name type="synonym">Cish3</name>
</gene>
<dbReference type="EMBL" id="U88328">
    <property type="protein sequence ID" value="AAB62403.1"/>
    <property type="molecule type" value="mRNA"/>
</dbReference>
<dbReference type="EMBL" id="AF314501">
    <property type="protein sequence ID" value="AAK60601.1"/>
    <property type="molecule type" value="Genomic_DNA"/>
</dbReference>
<dbReference type="EMBL" id="AK047165">
    <property type="protein sequence ID" value="BAC32977.1"/>
    <property type="molecule type" value="mRNA"/>
</dbReference>
<dbReference type="EMBL" id="AK139241">
    <property type="protein sequence ID" value="BAE23929.1"/>
    <property type="molecule type" value="mRNA"/>
</dbReference>
<dbReference type="EMBL" id="AK152468">
    <property type="protein sequence ID" value="BAE31244.1"/>
    <property type="molecule type" value="mRNA"/>
</dbReference>
<dbReference type="EMBL" id="AK152514">
    <property type="protein sequence ID" value="BAE31277.1"/>
    <property type="molecule type" value="mRNA"/>
</dbReference>
<dbReference type="EMBL" id="AK157708">
    <property type="protein sequence ID" value="BAE34161.1"/>
    <property type="molecule type" value="mRNA"/>
</dbReference>
<dbReference type="EMBL" id="AK159395">
    <property type="protein sequence ID" value="BAE35049.1"/>
    <property type="molecule type" value="mRNA"/>
</dbReference>
<dbReference type="EMBL" id="AK170406">
    <property type="protein sequence ID" value="BAE41773.1"/>
    <property type="molecule type" value="mRNA"/>
</dbReference>
<dbReference type="EMBL" id="AK172399">
    <property type="protein sequence ID" value="BAE42985.1"/>
    <property type="molecule type" value="mRNA"/>
</dbReference>
<dbReference type="EMBL" id="BC052031">
    <property type="protein sequence ID" value="AAH52031.1"/>
    <property type="molecule type" value="mRNA"/>
</dbReference>
<dbReference type="EMBL" id="AF117732">
    <property type="protein sequence ID" value="AAD18024.1"/>
    <property type="molecule type" value="Genomic_DNA"/>
</dbReference>
<dbReference type="EMBL" id="U72673">
    <property type="protein sequence ID" value="AAB51035.1"/>
    <property type="status" value="ALT_SEQ"/>
    <property type="molecule type" value="mRNA"/>
</dbReference>
<dbReference type="CCDS" id="CCDS25697.1"/>
<dbReference type="RefSeq" id="NP_031733.1">
    <property type="nucleotide sequence ID" value="NM_007707.3"/>
</dbReference>
<dbReference type="RefSeq" id="XP_011247009.1">
    <property type="nucleotide sequence ID" value="XM_011248707.2"/>
</dbReference>
<dbReference type="PDB" id="2BBU">
    <property type="method" value="NMR"/>
    <property type="chains" value="A=22-185"/>
</dbReference>
<dbReference type="PDB" id="2HMH">
    <property type="method" value="X-ray"/>
    <property type="resolution" value="2.00 A"/>
    <property type="chains" value="A=15-185"/>
</dbReference>
<dbReference type="PDB" id="2JZ3">
    <property type="method" value="NMR"/>
    <property type="chains" value="A=186-225"/>
</dbReference>
<dbReference type="PDB" id="4GL9">
    <property type="method" value="X-ray"/>
    <property type="resolution" value="3.90 A"/>
    <property type="chains" value="E/F/G/H=22-128, E/F/G/H=163-185"/>
</dbReference>
<dbReference type="PDBsum" id="2BBU"/>
<dbReference type="PDBsum" id="2HMH"/>
<dbReference type="PDBsum" id="2JZ3"/>
<dbReference type="PDBsum" id="4GL9"/>
<dbReference type="BMRB" id="O35718"/>
<dbReference type="SMR" id="O35718"/>
<dbReference type="BioGRID" id="198718">
    <property type="interactions" value="24"/>
</dbReference>
<dbReference type="CORUM" id="O35718"/>
<dbReference type="DIP" id="DIP-29137N"/>
<dbReference type="FunCoup" id="O35718">
    <property type="interactions" value="1398"/>
</dbReference>
<dbReference type="IntAct" id="O35718">
    <property type="interactions" value="18"/>
</dbReference>
<dbReference type="MINT" id="O35718"/>
<dbReference type="STRING" id="10090.ENSMUSP00000059129"/>
<dbReference type="GlyGen" id="O35718">
    <property type="glycosylation" value="1 site"/>
</dbReference>
<dbReference type="iPTMnet" id="O35718"/>
<dbReference type="PhosphoSitePlus" id="O35718"/>
<dbReference type="PaxDb" id="10090-ENSMUSP00000059129"/>
<dbReference type="Antibodypedia" id="3206">
    <property type="antibodies" value="830 antibodies from 43 providers"/>
</dbReference>
<dbReference type="DNASU" id="12702"/>
<dbReference type="Ensembl" id="ENSMUST00000054002.4">
    <property type="protein sequence ID" value="ENSMUSP00000059129.4"/>
    <property type="gene ID" value="ENSMUSG00000053113.4"/>
</dbReference>
<dbReference type="GeneID" id="12702"/>
<dbReference type="KEGG" id="mmu:12702"/>
<dbReference type="UCSC" id="uc007moi.2">
    <property type="organism name" value="mouse"/>
</dbReference>
<dbReference type="AGR" id="MGI:1201791"/>
<dbReference type="CTD" id="9021"/>
<dbReference type="MGI" id="MGI:1201791">
    <property type="gene designation" value="Socs3"/>
</dbReference>
<dbReference type="VEuPathDB" id="HostDB:ENSMUSG00000053113"/>
<dbReference type="eggNOG" id="KOG4566">
    <property type="taxonomic scope" value="Eukaryota"/>
</dbReference>
<dbReference type="GeneTree" id="ENSGT00940000159620"/>
<dbReference type="HOGENOM" id="CLU_079452_3_0_1"/>
<dbReference type="InParanoid" id="O35718"/>
<dbReference type="OMA" id="KLVHYYM"/>
<dbReference type="OrthoDB" id="6426624at2759"/>
<dbReference type="PhylomeDB" id="O35718"/>
<dbReference type="TreeFam" id="TF321368"/>
<dbReference type="Reactome" id="R-MMU-1059683">
    <property type="pathway name" value="Interleukin-6 signaling"/>
</dbReference>
<dbReference type="Reactome" id="R-MMU-877300">
    <property type="pathway name" value="Interferon gamma signaling"/>
</dbReference>
<dbReference type="Reactome" id="R-MMU-877312">
    <property type="pathway name" value="Regulation of IFNG signaling"/>
</dbReference>
<dbReference type="Reactome" id="R-MMU-8849474">
    <property type="pathway name" value="PTK6 Activates STAT3"/>
</dbReference>
<dbReference type="Reactome" id="R-MMU-8951664">
    <property type="pathway name" value="Neddylation"/>
</dbReference>
<dbReference type="Reactome" id="R-MMU-909733">
    <property type="pathway name" value="Interferon alpha/beta signaling"/>
</dbReference>
<dbReference type="Reactome" id="R-MMU-9705462">
    <property type="pathway name" value="Inactivation of CSF3 (G-CSF) signaling"/>
</dbReference>
<dbReference type="Reactome" id="R-MMU-983168">
    <property type="pathway name" value="Antigen processing: Ubiquitination &amp; Proteasome degradation"/>
</dbReference>
<dbReference type="UniPathway" id="UPA00143"/>
<dbReference type="BioGRID-ORCS" id="12702">
    <property type="hits" value="8 hits in 80 CRISPR screens"/>
</dbReference>
<dbReference type="EvolutionaryTrace" id="O35718"/>
<dbReference type="PRO" id="PR:O35718"/>
<dbReference type="Proteomes" id="UP000000589">
    <property type="component" value="Chromosome 11"/>
</dbReference>
<dbReference type="RNAct" id="O35718">
    <property type="molecule type" value="protein"/>
</dbReference>
<dbReference type="Bgee" id="ENSMUSG00000053113">
    <property type="expression patterns" value="Expressed in cleaving embryo and 225 other cell types or tissues"/>
</dbReference>
<dbReference type="GO" id="GO:0009898">
    <property type="term" value="C:cytoplasmic side of plasma membrane"/>
    <property type="evidence" value="ECO:0007669"/>
    <property type="project" value="Ensembl"/>
</dbReference>
<dbReference type="GO" id="GO:0005829">
    <property type="term" value="C:cytosol"/>
    <property type="evidence" value="ECO:0000304"/>
    <property type="project" value="Reactome"/>
</dbReference>
<dbReference type="GO" id="GO:0035198">
    <property type="term" value="F:miRNA binding"/>
    <property type="evidence" value="ECO:0000314"/>
    <property type="project" value="MGI"/>
</dbReference>
<dbReference type="GO" id="GO:0001784">
    <property type="term" value="F:phosphotyrosine residue binding"/>
    <property type="evidence" value="ECO:0000315"/>
    <property type="project" value="CAFA"/>
</dbReference>
<dbReference type="GO" id="GO:0030292">
    <property type="term" value="F:protein tyrosine kinase inhibitor activity"/>
    <property type="evidence" value="ECO:0007669"/>
    <property type="project" value="Ensembl"/>
</dbReference>
<dbReference type="GO" id="GO:0060670">
    <property type="term" value="P:branching involved in labyrinthine layer morphogenesis"/>
    <property type="evidence" value="ECO:0000315"/>
    <property type="project" value="MGI"/>
</dbReference>
<dbReference type="GO" id="GO:0030154">
    <property type="term" value="P:cell differentiation"/>
    <property type="evidence" value="ECO:0000314"/>
    <property type="project" value="MGI"/>
</dbReference>
<dbReference type="GO" id="GO:0097398">
    <property type="term" value="P:cellular response to interleukin-17"/>
    <property type="evidence" value="ECO:0000314"/>
    <property type="project" value="MGI"/>
</dbReference>
<dbReference type="GO" id="GO:1990830">
    <property type="term" value="P:cellular response to leukemia inhibitory factor"/>
    <property type="evidence" value="ECO:0000270"/>
    <property type="project" value="MGI"/>
</dbReference>
<dbReference type="GO" id="GO:0035556">
    <property type="term" value="P:intracellular signal transduction"/>
    <property type="evidence" value="ECO:0007669"/>
    <property type="project" value="InterPro"/>
</dbReference>
<dbReference type="GO" id="GO:0050728">
    <property type="term" value="P:negative regulation of inflammatory response"/>
    <property type="evidence" value="ECO:0000316"/>
    <property type="project" value="MGI"/>
</dbReference>
<dbReference type="GO" id="GO:0046627">
    <property type="term" value="P:negative regulation of insulin receptor signaling pathway"/>
    <property type="evidence" value="ECO:0000314"/>
    <property type="project" value="MGI"/>
</dbReference>
<dbReference type="GO" id="GO:0046426">
    <property type="term" value="P:negative regulation of receptor signaling pathway via JAK-STAT"/>
    <property type="evidence" value="ECO:0007669"/>
    <property type="project" value="Ensembl"/>
</dbReference>
<dbReference type="GO" id="GO:0009968">
    <property type="term" value="P:negative regulation of signal transduction"/>
    <property type="evidence" value="ECO:0000316"/>
    <property type="project" value="MGI"/>
</dbReference>
<dbReference type="GO" id="GO:0060674">
    <property type="term" value="P:placenta blood vessel development"/>
    <property type="evidence" value="ECO:0000315"/>
    <property type="project" value="MGI"/>
</dbReference>
<dbReference type="GO" id="GO:0045597">
    <property type="term" value="P:positive regulation of cell differentiation"/>
    <property type="evidence" value="ECO:0000314"/>
    <property type="project" value="MGI"/>
</dbReference>
<dbReference type="GO" id="GO:0016567">
    <property type="term" value="P:protein ubiquitination"/>
    <property type="evidence" value="ECO:0007669"/>
    <property type="project" value="UniProtKB-UniPathway"/>
</dbReference>
<dbReference type="GO" id="GO:0007165">
    <property type="term" value="P:signal transduction"/>
    <property type="evidence" value="ECO:0000316"/>
    <property type="project" value="MGI"/>
</dbReference>
<dbReference type="CDD" id="cd10384">
    <property type="entry name" value="SH2_SOCS3"/>
    <property type="match status" value="1"/>
</dbReference>
<dbReference type="CDD" id="cd03737">
    <property type="entry name" value="SOCS_SOCS3"/>
    <property type="match status" value="1"/>
</dbReference>
<dbReference type="DisProt" id="DP00446"/>
<dbReference type="FunFam" id="3.30.505.10:FF:000066">
    <property type="entry name" value="suppressor of cytokine signaling 3"/>
    <property type="match status" value="1"/>
</dbReference>
<dbReference type="Gene3D" id="3.30.505.10">
    <property type="entry name" value="SH2 domain"/>
    <property type="match status" value="1"/>
</dbReference>
<dbReference type="Gene3D" id="1.10.750.20">
    <property type="entry name" value="SOCS box"/>
    <property type="match status" value="1"/>
</dbReference>
<dbReference type="IDEAL" id="IID50193"/>
<dbReference type="InterPro" id="IPR000980">
    <property type="entry name" value="SH2"/>
</dbReference>
<dbReference type="InterPro" id="IPR036860">
    <property type="entry name" value="SH2_dom_sf"/>
</dbReference>
<dbReference type="InterPro" id="IPR035863">
    <property type="entry name" value="SOCS3_SH2"/>
</dbReference>
<dbReference type="InterPro" id="IPR028414">
    <property type="entry name" value="SOCS3_SOCS_box"/>
</dbReference>
<dbReference type="InterPro" id="IPR001496">
    <property type="entry name" value="SOCS_box"/>
</dbReference>
<dbReference type="InterPro" id="IPR036036">
    <property type="entry name" value="SOCS_box-like_dom_sf"/>
</dbReference>
<dbReference type="PANTHER" id="PTHR10155">
    <property type="entry name" value="PHOSPHATIDYLINOSITOL 3-KINASE REGULATORY SUBUNIT"/>
    <property type="match status" value="1"/>
</dbReference>
<dbReference type="PANTHER" id="PTHR10155:SF11">
    <property type="entry name" value="SUPPRESSOR OF CYTOKINE SIGNALING 3"/>
    <property type="match status" value="1"/>
</dbReference>
<dbReference type="Pfam" id="PF00017">
    <property type="entry name" value="SH2"/>
    <property type="match status" value="1"/>
</dbReference>
<dbReference type="SMART" id="SM00252">
    <property type="entry name" value="SH2"/>
    <property type="match status" value="1"/>
</dbReference>
<dbReference type="SMART" id="SM00253">
    <property type="entry name" value="SOCS"/>
    <property type="match status" value="1"/>
</dbReference>
<dbReference type="SMART" id="SM00969">
    <property type="entry name" value="SOCS_box"/>
    <property type="match status" value="1"/>
</dbReference>
<dbReference type="SUPFAM" id="SSF55550">
    <property type="entry name" value="SH2 domain"/>
    <property type="match status" value="1"/>
</dbReference>
<dbReference type="SUPFAM" id="SSF158235">
    <property type="entry name" value="SOCS box-like"/>
    <property type="match status" value="1"/>
</dbReference>
<dbReference type="PROSITE" id="PS50001">
    <property type="entry name" value="SH2"/>
    <property type="match status" value="1"/>
</dbReference>
<dbReference type="PROSITE" id="PS50225">
    <property type="entry name" value="SOCS"/>
    <property type="match status" value="1"/>
</dbReference>
<name>SOCS3_MOUSE</name>
<accession>O35718</accession>
<accession>P97803</accession>
<accession>Q3U7X5</accession>